<dbReference type="EMBL" id="Z92954">
    <property type="protein sequence ID" value="CAB07468.1"/>
    <property type="molecule type" value="Genomic_DNA"/>
</dbReference>
<dbReference type="EMBL" id="AB016245">
    <property type="protein sequence ID" value="BAA85264.1"/>
    <property type="molecule type" value="Genomic_DNA"/>
</dbReference>
<dbReference type="EMBL" id="AB039950">
    <property type="protein sequence ID" value="BAB13485.1"/>
    <property type="molecule type" value="Genomic_DNA"/>
</dbReference>
<dbReference type="EMBL" id="AB046355">
    <property type="protein sequence ID" value="BAB40949.1"/>
    <property type="molecule type" value="Genomic_DNA"/>
</dbReference>
<dbReference type="EMBL" id="AL009126">
    <property type="protein sequence ID" value="CAB15606.1"/>
    <property type="molecule type" value="Genomic_DNA"/>
</dbReference>
<dbReference type="PIR" id="G70069">
    <property type="entry name" value="G70069"/>
</dbReference>
<dbReference type="RefSeq" id="NP_391470.1">
    <property type="nucleotide sequence ID" value="NC_000964.3"/>
</dbReference>
<dbReference type="RefSeq" id="WP_003227889.1">
    <property type="nucleotide sequence ID" value="NZ_OZ025638.1"/>
</dbReference>
<dbReference type="FunCoup" id="P96737">
    <property type="interactions" value="24"/>
</dbReference>
<dbReference type="STRING" id="224308.BSU35890"/>
<dbReference type="PaxDb" id="224308-BSU35890"/>
<dbReference type="EnsemblBacteria" id="CAB15606">
    <property type="protein sequence ID" value="CAB15606"/>
    <property type="gene ID" value="BSU_35890"/>
</dbReference>
<dbReference type="GeneID" id="86871803"/>
<dbReference type="GeneID" id="936840"/>
<dbReference type="KEGG" id="bsu:BSU35890"/>
<dbReference type="PATRIC" id="fig|224308.179.peg.3885"/>
<dbReference type="eggNOG" id="ENOG50301E5">
    <property type="taxonomic scope" value="Bacteria"/>
</dbReference>
<dbReference type="InParanoid" id="P96737"/>
<dbReference type="OrthoDB" id="48792at2"/>
<dbReference type="BioCyc" id="BSUB:BSU35890-MONOMER"/>
<dbReference type="PRO" id="PR:P96737"/>
<dbReference type="Proteomes" id="UP000001570">
    <property type="component" value="Chromosome"/>
</dbReference>
<dbReference type="GO" id="GO:0016020">
    <property type="term" value="C:membrane"/>
    <property type="evidence" value="ECO:0007669"/>
    <property type="project" value="InterPro"/>
</dbReference>
<dbReference type="GO" id="GO:0045227">
    <property type="term" value="P:capsule polysaccharide biosynthetic process"/>
    <property type="evidence" value="ECO:0007669"/>
    <property type="project" value="InterPro"/>
</dbReference>
<dbReference type="InterPro" id="IPR008338">
    <property type="entry name" value="Capsule_biosynth_CapC"/>
</dbReference>
<dbReference type="NCBIfam" id="TIGR04011">
    <property type="entry name" value="poly_gGlu_PgsC"/>
    <property type="match status" value="1"/>
</dbReference>
<dbReference type="Pfam" id="PF14102">
    <property type="entry name" value="Caps_synth_CapC"/>
    <property type="match status" value="1"/>
</dbReference>
<dbReference type="PRINTS" id="PR01759">
    <property type="entry name" value="CAPSULEPROTC"/>
</dbReference>
<keyword id="KW-1185">Reference proteome</keyword>
<accession>P96737</accession>
<accession>Q795C7</accession>
<accession>Q9AJM2</accession>
<feature type="chain" id="PRO_0000089311" description="PGA biosynthesis protein CapC">
    <location>
        <begin position="1"/>
        <end position="149"/>
    </location>
</feature>
<feature type="sequence variant" description="In strain: IFO 16449.">
    <original>T</original>
    <variation>I</variation>
    <location>
        <position position="57"/>
    </location>
</feature>
<feature type="sequence variant" description="In strain: IFO 16449.">
    <original>AT</original>
    <variation>RA</variation>
    <location>
        <begin position="138"/>
        <end position="139"/>
    </location>
</feature>
<protein>
    <recommendedName>
        <fullName>PGA biosynthesis protein CapC</fullName>
    </recommendedName>
</protein>
<evidence type="ECO:0000269" key="1">
    <source>
    </source>
</evidence>
<organism>
    <name type="scientific">Bacillus subtilis (strain 168)</name>
    <dbReference type="NCBI Taxonomy" id="224308"/>
    <lineage>
        <taxon>Bacteria</taxon>
        <taxon>Bacillati</taxon>
        <taxon>Bacillota</taxon>
        <taxon>Bacilli</taxon>
        <taxon>Bacillales</taxon>
        <taxon>Bacillaceae</taxon>
        <taxon>Bacillus</taxon>
    </lineage>
</organism>
<sequence length="149" mass="16303">MFGSDLYIALILGVLLSLIFAEKTGIVPAGLVVPGYLGLVFNQPVFILLVLLVSLLTYVIVKYGLSKFMILYGRRKFAAMLITGIVLKIAFDFLYPIVPFEIAEFRGIGIIVPGLIANTIQKQGLTITFGSTLLLSGATFAIMFVYYLI</sequence>
<name>CAPC_BACSU</name>
<proteinExistence type="predicted"/>
<gene>
    <name type="primary">capC</name>
    <name type="synonym">pgsC</name>
    <name type="synonym">ywtA</name>
    <name type="ordered locus">BSU35890</name>
</gene>
<reference key="1">
    <citation type="journal article" date="1997" name="Microbiology">
        <title>The Bacillus subtilis genome from gerBC (311 degrees) to licR (334 degrees).</title>
        <authorList>
            <person name="Presecan E."/>
            <person name="Moszer I."/>
            <person name="Boursier L."/>
            <person name="Cruz Ramos H."/>
            <person name="De La Fuente V."/>
            <person name="Hullo M.-F."/>
            <person name="Lelong C."/>
            <person name="Schleich S."/>
            <person name="Sekowska A."/>
            <person name="Song B.H."/>
            <person name="Villani G."/>
            <person name="Kunst F."/>
            <person name="Danchin A."/>
            <person name="Glaser P."/>
        </authorList>
    </citation>
    <scope>NUCLEOTIDE SEQUENCE [GENOMIC DNA]</scope>
    <source>
        <strain>168</strain>
    </source>
</reference>
<reference key="2">
    <citation type="journal article" date="1999" name="Biochem. Biophys. Res. Commun.">
        <title>A poly-gamma-glutamate synthetic system of Bacillus subtilis IFO 3336: gene cloning and biochemical analysis of poly-gammma-glutamate produced by Escherichia coli clone cells.</title>
        <authorList>
            <person name="Ashiuchi M."/>
            <person name="Soda K."/>
            <person name="Misono H."/>
        </authorList>
    </citation>
    <scope>NUCLEOTIDE SEQUENCE [GENOMIC DNA]</scope>
    <source>
        <strain>NBRC 3336</strain>
    </source>
</reference>
<reference key="3">
    <citation type="submission" date="2000-03" db="EMBL/GenBank/DDBJ databases">
        <authorList>
            <person name="Tran L.P."/>
            <person name="Itoh Y."/>
        </authorList>
    </citation>
    <scope>NUCLEOTIDE SEQUENCE [GENOMIC DNA]</scope>
    <source>
        <strain>Asahikawa</strain>
    </source>
</reference>
<reference key="4">
    <citation type="journal article" date="2002" name="J. Bacteriol.">
        <title>Characterization of the Bacillus subtilis ywsC gene, involved in gamma-polyglutamic acid production.</title>
        <authorList>
            <person name="Urushibata Y."/>
            <person name="Tokuyama S."/>
            <person name="Tahara Y."/>
        </authorList>
    </citation>
    <scope>NUCLEOTIDE SEQUENCE [GENOMIC DNA]</scope>
    <scope>FUNCTION</scope>
    <scope>DISRUPTION PHENOTYPE</scope>
    <source>
        <strain>NBRC 16449</strain>
    </source>
</reference>
<reference key="5">
    <citation type="journal article" date="1997" name="Nature">
        <title>The complete genome sequence of the Gram-positive bacterium Bacillus subtilis.</title>
        <authorList>
            <person name="Kunst F."/>
            <person name="Ogasawara N."/>
            <person name="Moszer I."/>
            <person name="Albertini A.M."/>
            <person name="Alloni G."/>
            <person name="Azevedo V."/>
            <person name="Bertero M.G."/>
            <person name="Bessieres P."/>
            <person name="Bolotin A."/>
            <person name="Borchert S."/>
            <person name="Borriss R."/>
            <person name="Boursier L."/>
            <person name="Brans A."/>
            <person name="Braun M."/>
            <person name="Brignell S.C."/>
            <person name="Bron S."/>
            <person name="Brouillet S."/>
            <person name="Bruschi C.V."/>
            <person name="Caldwell B."/>
            <person name="Capuano V."/>
            <person name="Carter N.M."/>
            <person name="Choi S.-K."/>
            <person name="Codani J.-J."/>
            <person name="Connerton I.F."/>
            <person name="Cummings N.J."/>
            <person name="Daniel R.A."/>
            <person name="Denizot F."/>
            <person name="Devine K.M."/>
            <person name="Duesterhoeft A."/>
            <person name="Ehrlich S.D."/>
            <person name="Emmerson P.T."/>
            <person name="Entian K.-D."/>
            <person name="Errington J."/>
            <person name="Fabret C."/>
            <person name="Ferrari E."/>
            <person name="Foulger D."/>
            <person name="Fritz C."/>
            <person name="Fujita M."/>
            <person name="Fujita Y."/>
            <person name="Fuma S."/>
            <person name="Galizzi A."/>
            <person name="Galleron N."/>
            <person name="Ghim S.-Y."/>
            <person name="Glaser P."/>
            <person name="Goffeau A."/>
            <person name="Golightly E.J."/>
            <person name="Grandi G."/>
            <person name="Guiseppi G."/>
            <person name="Guy B.J."/>
            <person name="Haga K."/>
            <person name="Haiech J."/>
            <person name="Harwood C.R."/>
            <person name="Henaut A."/>
            <person name="Hilbert H."/>
            <person name="Holsappel S."/>
            <person name="Hosono S."/>
            <person name="Hullo M.-F."/>
            <person name="Itaya M."/>
            <person name="Jones L.-M."/>
            <person name="Joris B."/>
            <person name="Karamata D."/>
            <person name="Kasahara Y."/>
            <person name="Klaerr-Blanchard M."/>
            <person name="Klein C."/>
            <person name="Kobayashi Y."/>
            <person name="Koetter P."/>
            <person name="Koningstein G."/>
            <person name="Krogh S."/>
            <person name="Kumano M."/>
            <person name="Kurita K."/>
            <person name="Lapidus A."/>
            <person name="Lardinois S."/>
            <person name="Lauber J."/>
            <person name="Lazarevic V."/>
            <person name="Lee S.-M."/>
            <person name="Levine A."/>
            <person name="Liu H."/>
            <person name="Masuda S."/>
            <person name="Mauel C."/>
            <person name="Medigue C."/>
            <person name="Medina N."/>
            <person name="Mellado R.P."/>
            <person name="Mizuno M."/>
            <person name="Moestl D."/>
            <person name="Nakai S."/>
            <person name="Noback M."/>
            <person name="Noone D."/>
            <person name="O'Reilly M."/>
            <person name="Ogawa K."/>
            <person name="Ogiwara A."/>
            <person name="Oudega B."/>
            <person name="Park S.-H."/>
            <person name="Parro V."/>
            <person name="Pohl T.M."/>
            <person name="Portetelle D."/>
            <person name="Porwollik S."/>
            <person name="Prescott A.M."/>
            <person name="Presecan E."/>
            <person name="Pujic P."/>
            <person name="Purnelle B."/>
            <person name="Rapoport G."/>
            <person name="Rey M."/>
            <person name="Reynolds S."/>
            <person name="Rieger M."/>
            <person name="Rivolta C."/>
            <person name="Rocha E."/>
            <person name="Roche B."/>
            <person name="Rose M."/>
            <person name="Sadaie Y."/>
            <person name="Sato T."/>
            <person name="Scanlan E."/>
            <person name="Schleich S."/>
            <person name="Schroeter R."/>
            <person name="Scoffone F."/>
            <person name="Sekiguchi J."/>
            <person name="Sekowska A."/>
            <person name="Seror S.J."/>
            <person name="Serror P."/>
            <person name="Shin B.-S."/>
            <person name="Soldo B."/>
            <person name="Sorokin A."/>
            <person name="Tacconi E."/>
            <person name="Takagi T."/>
            <person name="Takahashi H."/>
            <person name="Takemaru K."/>
            <person name="Takeuchi M."/>
            <person name="Tamakoshi A."/>
            <person name="Tanaka T."/>
            <person name="Terpstra P."/>
            <person name="Tognoni A."/>
            <person name="Tosato V."/>
            <person name="Uchiyama S."/>
            <person name="Vandenbol M."/>
            <person name="Vannier F."/>
            <person name="Vassarotti A."/>
            <person name="Viari A."/>
            <person name="Wambutt R."/>
            <person name="Wedler E."/>
            <person name="Wedler H."/>
            <person name="Weitzenegger T."/>
            <person name="Winters P."/>
            <person name="Wipat A."/>
            <person name="Yamamoto H."/>
            <person name="Yamane K."/>
            <person name="Yasumoto K."/>
            <person name="Yata K."/>
            <person name="Yoshida K."/>
            <person name="Yoshikawa H.-F."/>
            <person name="Zumstein E."/>
            <person name="Yoshikawa H."/>
            <person name="Danchin A."/>
        </authorList>
    </citation>
    <scope>NUCLEOTIDE SEQUENCE [LARGE SCALE GENOMIC DNA]</scope>
    <source>
        <strain>168</strain>
    </source>
</reference>
<comment type="function">
    <text evidence="1">Required for PGA (gamma-polyglutamic acid) biosynthesis.</text>
</comment>
<comment type="disruption phenotype">
    <text evidence="1">Cells fail to secrete PGA into the medium.</text>
</comment>